<feature type="chain" id="PRO_0000348318" description="UPF0637 protein OB1420">
    <location>
        <begin position="1"/>
        <end position="205"/>
    </location>
</feature>
<keyword id="KW-1185">Reference proteome</keyword>
<gene>
    <name type="ordered locus">OB1420</name>
</gene>
<proteinExistence type="inferred from homology"/>
<organism>
    <name type="scientific">Oceanobacillus iheyensis (strain DSM 14371 / CIP 107618 / JCM 11309 / KCTC 3954 / HTE831)</name>
    <dbReference type="NCBI Taxonomy" id="221109"/>
    <lineage>
        <taxon>Bacteria</taxon>
        <taxon>Bacillati</taxon>
        <taxon>Bacillota</taxon>
        <taxon>Bacilli</taxon>
        <taxon>Bacillales</taxon>
        <taxon>Bacillaceae</taxon>
        <taxon>Oceanobacillus</taxon>
    </lineage>
</organism>
<sequence length="205" mass="23800">MNGFTNKDFETFNINGLDERMEAIQTRIQPKFQQIGESLAEDLSKKTNNELYLHIAKHARRTVNPPNDTWLAIADNKRGYKKHPHFQVGVFDDHVFIWLALIYELPNKSKIASAYINHFDEVKNLPTSYVVSLDHTKKDAISLTDLNKSHLERFRDVKKAEFLIGKHIEKGDPILANGDELYQFIMDVFEQLLPLYQLAIDSRDE</sequence>
<protein>
    <recommendedName>
        <fullName evidence="1">UPF0637 protein OB1420</fullName>
    </recommendedName>
</protein>
<accession>Q8ER92</accession>
<comment type="similarity">
    <text evidence="1">Belongs to the UPF0637 family.</text>
</comment>
<name>Y1420_OCEIH</name>
<reference key="1">
    <citation type="journal article" date="2002" name="Nucleic Acids Res.">
        <title>Genome sequence of Oceanobacillus iheyensis isolated from the Iheya Ridge and its unexpected adaptive capabilities to extreme environments.</title>
        <authorList>
            <person name="Takami H."/>
            <person name="Takaki Y."/>
            <person name="Uchiyama I."/>
        </authorList>
    </citation>
    <scope>NUCLEOTIDE SEQUENCE [LARGE SCALE GENOMIC DNA]</scope>
    <source>
        <strain>DSM 14371 / CIP 107618 / JCM 11309 / KCTC 3954 / HTE831</strain>
    </source>
</reference>
<evidence type="ECO:0000255" key="1">
    <source>
        <dbReference type="HAMAP-Rule" id="MF_01851"/>
    </source>
</evidence>
<dbReference type="EMBL" id="BA000028">
    <property type="protein sequence ID" value="BAC13376.1"/>
    <property type="molecule type" value="Genomic_DNA"/>
</dbReference>
<dbReference type="RefSeq" id="WP_011065826.1">
    <property type="nucleotide sequence ID" value="NC_004193.1"/>
</dbReference>
<dbReference type="SMR" id="Q8ER92"/>
<dbReference type="STRING" id="221109.gene:10733660"/>
<dbReference type="KEGG" id="oih:OB1420"/>
<dbReference type="eggNOG" id="COG4493">
    <property type="taxonomic scope" value="Bacteria"/>
</dbReference>
<dbReference type="HOGENOM" id="CLU_096059_0_0_9"/>
<dbReference type="OrthoDB" id="9812818at2"/>
<dbReference type="PhylomeDB" id="Q8ER92"/>
<dbReference type="Proteomes" id="UP000000822">
    <property type="component" value="Chromosome"/>
</dbReference>
<dbReference type="Gene3D" id="3.30.930.20">
    <property type="entry name" value="Protein of unknown function DUF1054"/>
    <property type="match status" value="1"/>
</dbReference>
<dbReference type="HAMAP" id="MF_01851">
    <property type="entry name" value="UPF0637"/>
    <property type="match status" value="1"/>
</dbReference>
<dbReference type="InterPro" id="IPR009403">
    <property type="entry name" value="UPF0637"/>
</dbReference>
<dbReference type="InterPro" id="IPR053707">
    <property type="entry name" value="UPF0637_domain_sf"/>
</dbReference>
<dbReference type="Pfam" id="PF06335">
    <property type="entry name" value="DUF1054"/>
    <property type="match status" value="1"/>
</dbReference>
<dbReference type="PIRSF" id="PIRSF021332">
    <property type="entry name" value="DUF1054"/>
    <property type="match status" value="1"/>
</dbReference>
<dbReference type="SUPFAM" id="SSF142913">
    <property type="entry name" value="YktB/PF0168-like"/>
    <property type="match status" value="1"/>
</dbReference>